<feature type="chain" id="PRO_1000054991" description="Small ribosomal subunit protein uS17">
    <location>
        <begin position="1"/>
        <end position="89"/>
    </location>
</feature>
<gene>
    <name evidence="1" type="primary">rpsQ</name>
    <name type="ordered locus">Bpro_0265</name>
</gene>
<accession>Q12GW2</accession>
<reference key="1">
    <citation type="journal article" date="2008" name="Appl. Environ. Microbiol.">
        <title>The genome of Polaromonas sp. strain JS666: insights into the evolution of a hydrocarbon- and xenobiotic-degrading bacterium, and features of relevance to biotechnology.</title>
        <authorList>
            <person name="Mattes T.E."/>
            <person name="Alexander A.K."/>
            <person name="Richardson P.M."/>
            <person name="Munk A.C."/>
            <person name="Han C.S."/>
            <person name="Stothard P."/>
            <person name="Coleman N.V."/>
        </authorList>
    </citation>
    <scope>NUCLEOTIDE SEQUENCE [LARGE SCALE GENOMIC DNA]</scope>
    <source>
        <strain>JS666 / ATCC BAA-500</strain>
    </source>
</reference>
<keyword id="KW-1185">Reference proteome</keyword>
<keyword id="KW-0687">Ribonucleoprotein</keyword>
<keyword id="KW-0689">Ribosomal protein</keyword>
<keyword id="KW-0694">RNA-binding</keyword>
<keyword id="KW-0699">rRNA-binding</keyword>
<proteinExistence type="inferred from homology"/>
<dbReference type="EMBL" id="CP000316">
    <property type="protein sequence ID" value="ABE42230.1"/>
    <property type="molecule type" value="Genomic_DNA"/>
</dbReference>
<dbReference type="RefSeq" id="WP_011481237.1">
    <property type="nucleotide sequence ID" value="NC_007948.1"/>
</dbReference>
<dbReference type="SMR" id="Q12GW2"/>
<dbReference type="STRING" id="296591.Bpro_0265"/>
<dbReference type="KEGG" id="pol:Bpro_0265"/>
<dbReference type="eggNOG" id="COG0186">
    <property type="taxonomic scope" value="Bacteria"/>
</dbReference>
<dbReference type="HOGENOM" id="CLU_073626_1_1_4"/>
<dbReference type="OrthoDB" id="9811714at2"/>
<dbReference type="Proteomes" id="UP000001983">
    <property type="component" value="Chromosome"/>
</dbReference>
<dbReference type="GO" id="GO:0022627">
    <property type="term" value="C:cytosolic small ribosomal subunit"/>
    <property type="evidence" value="ECO:0007669"/>
    <property type="project" value="TreeGrafter"/>
</dbReference>
<dbReference type="GO" id="GO:0019843">
    <property type="term" value="F:rRNA binding"/>
    <property type="evidence" value="ECO:0007669"/>
    <property type="project" value="UniProtKB-UniRule"/>
</dbReference>
<dbReference type="GO" id="GO:0003735">
    <property type="term" value="F:structural constituent of ribosome"/>
    <property type="evidence" value="ECO:0007669"/>
    <property type="project" value="InterPro"/>
</dbReference>
<dbReference type="GO" id="GO:0006412">
    <property type="term" value="P:translation"/>
    <property type="evidence" value="ECO:0007669"/>
    <property type="project" value="UniProtKB-UniRule"/>
</dbReference>
<dbReference type="CDD" id="cd00364">
    <property type="entry name" value="Ribosomal_uS17"/>
    <property type="match status" value="1"/>
</dbReference>
<dbReference type="Gene3D" id="2.40.50.140">
    <property type="entry name" value="Nucleic acid-binding proteins"/>
    <property type="match status" value="1"/>
</dbReference>
<dbReference type="HAMAP" id="MF_01345_B">
    <property type="entry name" value="Ribosomal_uS17_B"/>
    <property type="match status" value="1"/>
</dbReference>
<dbReference type="InterPro" id="IPR012340">
    <property type="entry name" value="NA-bd_OB-fold"/>
</dbReference>
<dbReference type="InterPro" id="IPR000266">
    <property type="entry name" value="Ribosomal_uS17"/>
</dbReference>
<dbReference type="InterPro" id="IPR019984">
    <property type="entry name" value="Ribosomal_uS17_bact/chlr"/>
</dbReference>
<dbReference type="InterPro" id="IPR019979">
    <property type="entry name" value="Ribosomal_uS17_CS"/>
</dbReference>
<dbReference type="NCBIfam" id="NF004123">
    <property type="entry name" value="PRK05610.1"/>
    <property type="match status" value="1"/>
</dbReference>
<dbReference type="NCBIfam" id="TIGR03635">
    <property type="entry name" value="uS17_bact"/>
    <property type="match status" value="1"/>
</dbReference>
<dbReference type="PANTHER" id="PTHR10744">
    <property type="entry name" value="40S RIBOSOMAL PROTEIN S11 FAMILY MEMBER"/>
    <property type="match status" value="1"/>
</dbReference>
<dbReference type="PANTHER" id="PTHR10744:SF1">
    <property type="entry name" value="SMALL RIBOSOMAL SUBUNIT PROTEIN US17M"/>
    <property type="match status" value="1"/>
</dbReference>
<dbReference type="Pfam" id="PF00366">
    <property type="entry name" value="Ribosomal_S17"/>
    <property type="match status" value="1"/>
</dbReference>
<dbReference type="PRINTS" id="PR00973">
    <property type="entry name" value="RIBOSOMALS17"/>
</dbReference>
<dbReference type="SUPFAM" id="SSF50249">
    <property type="entry name" value="Nucleic acid-binding proteins"/>
    <property type="match status" value="1"/>
</dbReference>
<dbReference type="PROSITE" id="PS00056">
    <property type="entry name" value="RIBOSOMAL_S17"/>
    <property type="match status" value="1"/>
</dbReference>
<sequence>MTEAKKSLKRTLIGKVVSDKRAKTVTVLVERRVKHELYGKIVSLSSKYHAHDEKGEYHTGDVIEITESRPISKTKNWVVTRLVEKAAAV</sequence>
<organism>
    <name type="scientific">Polaromonas sp. (strain JS666 / ATCC BAA-500)</name>
    <dbReference type="NCBI Taxonomy" id="296591"/>
    <lineage>
        <taxon>Bacteria</taxon>
        <taxon>Pseudomonadati</taxon>
        <taxon>Pseudomonadota</taxon>
        <taxon>Betaproteobacteria</taxon>
        <taxon>Burkholderiales</taxon>
        <taxon>Comamonadaceae</taxon>
        <taxon>Polaromonas</taxon>
    </lineage>
</organism>
<protein>
    <recommendedName>
        <fullName evidence="1">Small ribosomal subunit protein uS17</fullName>
    </recommendedName>
    <alternativeName>
        <fullName evidence="2">30S ribosomal protein S17</fullName>
    </alternativeName>
</protein>
<name>RS17_POLSJ</name>
<evidence type="ECO:0000255" key="1">
    <source>
        <dbReference type="HAMAP-Rule" id="MF_01345"/>
    </source>
</evidence>
<evidence type="ECO:0000305" key="2"/>
<comment type="function">
    <text evidence="1">One of the primary rRNA binding proteins, it binds specifically to the 5'-end of 16S ribosomal RNA.</text>
</comment>
<comment type="subunit">
    <text evidence="1">Part of the 30S ribosomal subunit.</text>
</comment>
<comment type="similarity">
    <text evidence="1">Belongs to the universal ribosomal protein uS17 family.</text>
</comment>